<feature type="signal peptide" evidence="18">
    <location>
        <begin position="1"/>
        <end position="23"/>
    </location>
</feature>
<feature type="propeptide" id="PRO_0000011088" evidence="18">
    <location>
        <begin position="24"/>
        <end position="49"/>
    </location>
</feature>
<feature type="chain" id="PRO_0000011089" description="Osteocalcin">
    <location>
        <begin position="50"/>
        <end position="95"/>
    </location>
</feature>
<feature type="domain" description="Gla" evidence="4">
    <location>
        <begin position="46"/>
        <end position="92"/>
    </location>
</feature>
<feature type="binding site" evidence="2">
    <location>
        <position position="62"/>
    </location>
    <ligand>
        <name>Ca(2+)</name>
        <dbReference type="ChEBI" id="CHEBI:29108"/>
        <label>1</label>
    </ligand>
</feature>
<feature type="binding site" evidence="2">
    <location>
        <position position="66"/>
    </location>
    <ligand>
        <name>Ca(2+)</name>
        <dbReference type="ChEBI" id="CHEBI:29108"/>
        <label>2</label>
    </ligand>
</feature>
<feature type="binding site" evidence="2">
    <location>
        <position position="69"/>
    </location>
    <ligand>
        <name>Ca(2+)</name>
        <dbReference type="ChEBI" id="CHEBI:29108"/>
        <label>2</label>
    </ligand>
</feature>
<feature type="binding site" evidence="2">
    <location>
        <position position="69"/>
    </location>
    <ligand>
        <name>Ca(2+)</name>
        <dbReference type="ChEBI" id="CHEBI:29108"/>
        <label>3</label>
    </ligand>
</feature>
<feature type="binding site" evidence="2">
    <location>
        <position position="75"/>
    </location>
    <ligand>
        <name>Ca(2+)</name>
        <dbReference type="ChEBI" id="CHEBI:29108"/>
        <label>3</label>
    </ligand>
</feature>
<feature type="modified residue" description="4-carboxyglutamate" evidence="1 4">
    <location>
        <position position="62"/>
    </location>
</feature>
<feature type="modified residue" description="4-carboxyglutamate" evidence="3 4">
    <location>
        <position position="66"/>
    </location>
</feature>
<feature type="modified residue" description="4-carboxyglutamate" evidence="3 4">
    <location>
        <position position="69"/>
    </location>
</feature>
<feature type="disulfide bond" evidence="4">
    <location>
        <begin position="68"/>
        <end position="74"/>
    </location>
</feature>
<protein>
    <recommendedName>
        <fullName evidence="16">Osteocalcin</fullName>
        <shortName evidence="17">OG1</shortName>
    </recommendedName>
    <alternativeName>
        <fullName evidence="19">Bone Gla protein</fullName>
        <shortName>BGP</shortName>
    </alternativeName>
    <alternativeName>
        <fullName>Gamma-carboxyglutamic acid-containing protein</fullName>
    </alternativeName>
</protein>
<name>OSTCN_MOUSE</name>
<accession>P86546</accession>
<accession>P04641</accession>
<gene>
    <name evidence="19" type="primary">Bglap</name>
    <name evidence="15" type="synonym">Ocn</name>
</gene>
<keyword id="KW-0091">Biomineralization</keyword>
<keyword id="KW-0106">Calcium</keyword>
<keyword id="KW-0165">Cleavage on pair of basic residues</keyword>
<keyword id="KW-1015">Disulfide bond</keyword>
<keyword id="KW-0301">Gamma-carboxyglutamic acid</keyword>
<keyword id="KW-0372">Hormone</keyword>
<keyword id="KW-0479">Metal-binding</keyword>
<keyword id="KW-1185">Reference proteome</keyword>
<keyword id="KW-0964">Secreted</keyword>
<keyword id="KW-0732">Signal</keyword>
<proteinExistence type="evidence at protein level"/>
<organism>
    <name type="scientific">Mus musculus</name>
    <name type="common">Mouse</name>
    <dbReference type="NCBI Taxonomy" id="10090"/>
    <lineage>
        <taxon>Eukaryota</taxon>
        <taxon>Metazoa</taxon>
        <taxon>Chordata</taxon>
        <taxon>Craniata</taxon>
        <taxon>Vertebrata</taxon>
        <taxon>Euteleostomi</taxon>
        <taxon>Mammalia</taxon>
        <taxon>Eutheria</taxon>
        <taxon>Euarchontoglires</taxon>
        <taxon>Glires</taxon>
        <taxon>Rodentia</taxon>
        <taxon>Myomorpha</taxon>
        <taxon>Muroidea</taxon>
        <taxon>Muridae</taxon>
        <taxon>Murinae</taxon>
        <taxon>Mus</taxon>
        <taxon>Mus</taxon>
    </lineage>
</organism>
<dbReference type="EMBL" id="L24431">
    <property type="protein sequence ID" value="AAA39856.1"/>
    <property type="molecule type" value="Genomic_DNA"/>
</dbReference>
<dbReference type="EMBL" id="U11542">
    <property type="protein sequence ID" value="AAB40035.1"/>
    <property type="molecule type" value="mRNA"/>
</dbReference>
<dbReference type="EMBL" id="AC102388">
    <property type="status" value="NOT_ANNOTATED_CDS"/>
    <property type="molecule type" value="Genomic_DNA"/>
</dbReference>
<dbReference type="CCDS" id="CCDS17474.1"/>
<dbReference type="RefSeq" id="NP_031567.1">
    <property type="nucleotide sequence ID" value="NM_007541.3"/>
</dbReference>
<dbReference type="SMR" id="P86546"/>
<dbReference type="BioGRID" id="198343">
    <property type="interactions" value="1"/>
</dbReference>
<dbReference type="FunCoup" id="P86546">
    <property type="interactions" value="57"/>
</dbReference>
<dbReference type="STRING" id="10090.ENSMUSP00000075425"/>
<dbReference type="PaxDb" id="10090-ENSMUSP00000075425"/>
<dbReference type="PeptideAtlas" id="P86546"/>
<dbReference type="DNASU" id="12096"/>
<dbReference type="Ensembl" id="ENSMUST00000076048.5">
    <property type="protein sequence ID" value="ENSMUSP00000075425.5"/>
    <property type="gene ID" value="ENSMUSG00000074483.3"/>
</dbReference>
<dbReference type="GeneID" id="12096"/>
<dbReference type="KEGG" id="mmu:12096"/>
<dbReference type="UCSC" id="uc008puy.2">
    <property type="organism name" value="mouse"/>
</dbReference>
<dbReference type="AGR" id="MGI:88156"/>
<dbReference type="CTD" id="632"/>
<dbReference type="MGI" id="MGI:88156">
    <property type="gene designation" value="Bglap"/>
</dbReference>
<dbReference type="VEuPathDB" id="HostDB:ENSMUSG00000074483"/>
<dbReference type="eggNOG" id="ENOG502S85I">
    <property type="taxonomic scope" value="Eukaryota"/>
</dbReference>
<dbReference type="GeneTree" id="ENSGT00410000026290"/>
<dbReference type="HOGENOM" id="CLU_160110_0_0_1"/>
<dbReference type="InParanoid" id="P86546"/>
<dbReference type="OMA" id="FQDRAYT"/>
<dbReference type="OrthoDB" id="9950568at2759"/>
<dbReference type="PhylomeDB" id="P86546"/>
<dbReference type="TreeFam" id="TF330920"/>
<dbReference type="BioGRID-ORCS" id="12096">
    <property type="hits" value="3 hits in 41 CRISPR screens"/>
</dbReference>
<dbReference type="PRO" id="PR:P86546"/>
<dbReference type="Proteomes" id="UP000000589">
    <property type="component" value="Chromosome 3"/>
</dbReference>
<dbReference type="RNAct" id="P86546">
    <property type="molecule type" value="protein"/>
</dbReference>
<dbReference type="Bgee" id="ENSMUSG00000074483">
    <property type="expression patterns" value="Expressed in white adipose tissue and 68 other cell types or tissues"/>
</dbReference>
<dbReference type="GO" id="GO:0005737">
    <property type="term" value="C:cytoplasm"/>
    <property type="evidence" value="ECO:0000314"/>
    <property type="project" value="UniProtKB"/>
</dbReference>
<dbReference type="GO" id="GO:0005576">
    <property type="term" value="C:extracellular region"/>
    <property type="evidence" value="ECO:0000314"/>
    <property type="project" value="UniProtKB"/>
</dbReference>
<dbReference type="GO" id="GO:0005509">
    <property type="term" value="F:calcium ion binding"/>
    <property type="evidence" value="ECO:0007669"/>
    <property type="project" value="InterPro"/>
</dbReference>
<dbReference type="GO" id="GO:0005179">
    <property type="term" value="F:hormone activity"/>
    <property type="evidence" value="ECO:0000314"/>
    <property type="project" value="UniProtKB"/>
</dbReference>
<dbReference type="GO" id="GO:0008147">
    <property type="term" value="F:structural constituent of bone"/>
    <property type="evidence" value="ECO:0000315"/>
    <property type="project" value="UniProtKB"/>
</dbReference>
<dbReference type="GO" id="GO:0031214">
    <property type="term" value="P:biomineral tissue development"/>
    <property type="evidence" value="ECO:0007669"/>
    <property type="project" value="UniProtKB-KW"/>
</dbReference>
<dbReference type="GO" id="GO:0060348">
    <property type="term" value="P:bone development"/>
    <property type="evidence" value="ECO:0007669"/>
    <property type="project" value="InterPro"/>
</dbReference>
<dbReference type="GO" id="GO:0007420">
    <property type="term" value="P:brain development"/>
    <property type="evidence" value="ECO:0000314"/>
    <property type="project" value="UniProt"/>
</dbReference>
<dbReference type="GO" id="GO:0071773">
    <property type="term" value="P:cellular response to BMP stimulus"/>
    <property type="evidence" value="ECO:0000314"/>
    <property type="project" value="MGI"/>
</dbReference>
<dbReference type="GO" id="GO:0032869">
    <property type="term" value="P:cellular response to insulin stimulus"/>
    <property type="evidence" value="ECO:0000314"/>
    <property type="project" value="UniProt"/>
</dbReference>
<dbReference type="GO" id="GO:0050890">
    <property type="term" value="P:cognition"/>
    <property type="evidence" value="ECO:0000314"/>
    <property type="project" value="UniProt"/>
</dbReference>
<dbReference type="GO" id="GO:0042593">
    <property type="term" value="P:glucose homeostasis"/>
    <property type="evidence" value="ECO:0000314"/>
    <property type="project" value="UniProt"/>
</dbReference>
<dbReference type="GO" id="GO:0007611">
    <property type="term" value="P:learning or memory"/>
    <property type="evidence" value="ECO:0000315"/>
    <property type="project" value="UniProtKB"/>
</dbReference>
<dbReference type="GO" id="GO:1903011">
    <property type="term" value="P:negative regulation of bone development"/>
    <property type="evidence" value="ECO:0000315"/>
    <property type="project" value="UniProtKB"/>
</dbReference>
<dbReference type="GO" id="GO:0001956">
    <property type="term" value="P:positive regulation of neurotransmitter secretion"/>
    <property type="evidence" value="ECO:0000314"/>
    <property type="project" value="UniProt"/>
</dbReference>
<dbReference type="GO" id="GO:0030500">
    <property type="term" value="P:regulation of bone mineralization"/>
    <property type="evidence" value="ECO:0007669"/>
    <property type="project" value="InterPro"/>
</dbReference>
<dbReference type="GO" id="GO:1900076">
    <property type="term" value="P:regulation of cellular response to insulin stimulus"/>
    <property type="evidence" value="ECO:0007669"/>
    <property type="project" value="InterPro"/>
</dbReference>
<dbReference type="GO" id="GO:2000224">
    <property type="term" value="P:regulation of testosterone biosynthetic process"/>
    <property type="evidence" value="ECO:0000314"/>
    <property type="project" value="UniProt"/>
</dbReference>
<dbReference type="GO" id="GO:0032571">
    <property type="term" value="P:response to vitamin K"/>
    <property type="evidence" value="ECO:0007669"/>
    <property type="project" value="InterPro"/>
</dbReference>
<dbReference type="GO" id="GO:0044342">
    <property type="term" value="P:type B pancreatic cell proliferation"/>
    <property type="evidence" value="ECO:0000314"/>
    <property type="project" value="UniProt"/>
</dbReference>
<dbReference type="InterPro" id="IPR035972">
    <property type="entry name" value="GLA-like_dom_SF"/>
</dbReference>
<dbReference type="InterPro" id="IPR000294">
    <property type="entry name" value="GLA_domain"/>
</dbReference>
<dbReference type="InterPro" id="IPR039176">
    <property type="entry name" value="Osteocalcin"/>
</dbReference>
<dbReference type="InterPro" id="IPR002384">
    <property type="entry name" value="Osteocalcin/MGP"/>
</dbReference>
<dbReference type="PANTHER" id="PTHR14235">
    <property type="entry name" value="OSTEOCALCIN"/>
    <property type="match status" value="1"/>
</dbReference>
<dbReference type="PANTHER" id="PTHR14235:SF0">
    <property type="entry name" value="OSTEOCALCIN"/>
    <property type="match status" value="1"/>
</dbReference>
<dbReference type="PRINTS" id="PR00002">
    <property type="entry name" value="GLABONE"/>
</dbReference>
<dbReference type="SMART" id="SM00069">
    <property type="entry name" value="GLA"/>
    <property type="match status" value="1"/>
</dbReference>
<dbReference type="SUPFAM" id="SSF57630">
    <property type="entry name" value="GLA-domain"/>
    <property type="match status" value="1"/>
</dbReference>
<dbReference type="PROSITE" id="PS00011">
    <property type="entry name" value="GLA_1"/>
    <property type="match status" value="1"/>
</dbReference>
<dbReference type="PROSITE" id="PS50998">
    <property type="entry name" value="GLA_2"/>
    <property type="match status" value="1"/>
</dbReference>
<sequence length="95" mass="10549">MRTIFLLTLLTLAALCLSDLTDAKPSGPESDKAFMSKQEGNKVVNRLRRYLGASVPSPDPLEPTREQCELNPACDELSDQYGLKTAYKRIYGITI</sequence>
<evidence type="ECO:0000250" key="1">
    <source>
        <dbReference type="UniProtKB" id="P02818"/>
    </source>
</evidence>
<evidence type="ECO:0000250" key="2">
    <source>
        <dbReference type="UniProtKB" id="P02820"/>
    </source>
</evidence>
<evidence type="ECO:0000250" key="3">
    <source>
        <dbReference type="UniProtKB" id="P83489"/>
    </source>
</evidence>
<evidence type="ECO:0000255" key="4">
    <source>
        <dbReference type="PROSITE-ProRule" id="PRU00463"/>
    </source>
</evidence>
<evidence type="ECO:0000269" key="5">
    <source>
    </source>
</evidence>
<evidence type="ECO:0000269" key="6">
    <source>
    </source>
</evidence>
<evidence type="ECO:0000269" key="7">
    <source>
    </source>
</evidence>
<evidence type="ECO:0000269" key="8">
    <source>
    </source>
</evidence>
<evidence type="ECO:0000269" key="9">
    <source>
    </source>
</evidence>
<evidence type="ECO:0000269" key="10">
    <source>
    </source>
</evidence>
<evidence type="ECO:0000269" key="11">
    <source>
    </source>
</evidence>
<evidence type="ECO:0000269" key="12">
    <source>
    </source>
</evidence>
<evidence type="ECO:0000269" key="13">
    <source>
    </source>
</evidence>
<evidence type="ECO:0000269" key="14">
    <source>
    </source>
</evidence>
<evidence type="ECO:0000303" key="15">
    <source>
    </source>
</evidence>
<evidence type="ECO:0000303" key="16">
    <source>
    </source>
</evidence>
<evidence type="ECO:0000303" key="17">
    <source>
    </source>
</evidence>
<evidence type="ECO:0000305" key="18"/>
<evidence type="ECO:0000312" key="19">
    <source>
        <dbReference type="MGI" id="MGI:88156"/>
    </source>
</evidence>
<comment type="function">
    <text evidence="5 14">The carboxylated form is one of the main organic components of the bone matrix, which constitutes 1-2% of the total bone protein: it acts as a negative regulator of bone formation and is required to limit bone formation without impairing bone resorption or mineralization (PubMed:8684484). The carboxylated form binds strongly to apatite and calcium (PubMed:17693256).</text>
</comment>
<comment type="function">
    <text evidence="5 6 7 8 10 11">The uncarboxylated form acts as a hormone secreted by osteoblasts, which regulates different cellular processes, such as energy metabolism, male fertility and brain development (PubMed:17693256, PubMed:20655470, PubMed:20655471, PubMed:21333348, PubMed:24074871). Regulates of energy metabolism by acting as a hormone favoring pancreatic beta-cell proliferation, insulin secretion and sensitivity and energy expenditure (PubMed:17693256, PubMed:20655470, PubMed:20655471). Uncarboxylated osteocalcin hormone also promotes testosterone production in the testes: acts as a ligand for G protein-coupled receptor GPRC6A at the surface of Leydig cells, initiating a signaling response that promotes the expression of enzymes required for testosterone synthesis in a CREB-dependent manner (PubMed:21333348). Also acts as a regulator of brain development: osteocalcin hormone crosses the blood-brain barrier and acts as a ligand for GPR158 on neurons, initiating a signaling response that prevents neuronal apoptosis in the hippocampus, favors the synthesis of all monoamine neurotransmitters and inhibits that of gamma-aminobutyric acid (GABA) (PubMed:24074871, PubMed:28851741). Osteocalcin also crosses the placenta during pregnancy and maternal osteocalcin is required for fetal brain development (PubMed:24074871).</text>
</comment>
<comment type="subcellular location">
    <subcellularLocation>
        <location evidence="5 6 7 8 10">Secreted</location>
    </subcellularLocation>
</comment>
<comment type="tissue specificity">
    <text evidence="13">Bone.</text>
</comment>
<comment type="developmental stage">
    <text evidence="9 12">Expressed in early bell stage dental mesenchymal cells at 15.5 dpc (at protein level) (PubMed:24028588). Expressed in bell stage dental mesenchymal cells at 17.5 dpc (PubMed:29148101).</text>
</comment>
<comment type="PTM">
    <text evidence="1 5 6 7 8 10">Gamma-carboxyglutamate residues are formed by vitamin K dependent carboxylation by GGCX (By similarity). These residues are essential for the binding of calcium (By similarity). Carboxylated in a Ptprv/Esp-dependent process (PubMed:17693256, PubMed:20655470, PubMed:20655471). Decarboxylation promotes the hormone activity (PubMed:17693256, PubMed:20655470, PubMed:20655471, PubMed:21333348, PubMed:24074871).</text>
</comment>
<comment type="disruption phenotype">
    <text evidence="8 10 14">Mice lacking Bglap and Bglap2 show increased bone formation, characterized by higher bone mass and bones of improved functional quality (PubMed:8684484). Mice lacking Bglap and Bglap2 also display reduced male fertility due to decreased testosterone production in the testes (PubMed:21333348). Mice lacking Bglap and Bglap2 are passive and show greater anxiety-like behaviors due to impaired synthesis of neurotransmitters (PubMed:24074871).</text>
</comment>
<comment type="similarity">
    <text evidence="18">Belongs to the osteocalcin/matrix Gla protein family.</text>
</comment>
<reference key="1">
    <citation type="journal article" date="1994" name="J. Biol. Chem.">
        <title>The mouse osteocalcin gene cluster contains three genes with two separate spatial and temporal patterns of expression.</title>
        <authorList>
            <person name="Desbois C."/>
            <person name="Hogue D.A."/>
            <person name="Karsenty G."/>
        </authorList>
    </citation>
    <scope>NUCLEOTIDE SEQUENCE [GENOMIC DNA]</scope>
    <scope>TISSUE SPECIFICITY</scope>
</reference>
<reference key="2">
    <citation type="submission" date="1994-07" db="EMBL/GenBank/DDBJ databases">
        <title>Mouse osteocalcin cDNA sequence.</title>
        <authorList>
            <person name="Yotov W.V."/>
            <person name="St Arnaud R."/>
        </authorList>
    </citation>
    <scope>NUCLEOTIDE SEQUENCE [MRNA]</scope>
    <source>
        <strain>C57BL/6J</strain>
        <tissue>Calvaria</tissue>
    </source>
</reference>
<reference key="3">
    <citation type="journal article" date="2009" name="PLoS Biol.">
        <title>Lineage-specific biology revealed by a finished genome assembly of the mouse.</title>
        <authorList>
            <person name="Church D.M."/>
            <person name="Goodstadt L."/>
            <person name="Hillier L.W."/>
            <person name="Zody M.C."/>
            <person name="Goldstein S."/>
            <person name="She X."/>
            <person name="Bult C.J."/>
            <person name="Agarwala R."/>
            <person name="Cherry J.L."/>
            <person name="DiCuccio M."/>
            <person name="Hlavina W."/>
            <person name="Kapustin Y."/>
            <person name="Meric P."/>
            <person name="Maglott D."/>
            <person name="Birtle Z."/>
            <person name="Marques A.C."/>
            <person name="Graves T."/>
            <person name="Zhou S."/>
            <person name="Teague B."/>
            <person name="Potamousis K."/>
            <person name="Churas C."/>
            <person name="Place M."/>
            <person name="Herschleb J."/>
            <person name="Runnheim R."/>
            <person name="Forrest D."/>
            <person name="Amos-Landgraf J."/>
            <person name="Schwartz D.C."/>
            <person name="Cheng Z."/>
            <person name="Lindblad-Toh K."/>
            <person name="Eichler E.E."/>
            <person name="Ponting C.P."/>
        </authorList>
    </citation>
    <scope>NUCLEOTIDE SEQUENCE [LARGE SCALE GENOMIC DNA]</scope>
    <source>
        <strain>C57BL/6J</strain>
    </source>
</reference>
<reference key="4">
    <citation type="journal article" date="1996" name="Nature">
        <title>Increased bone formation in osteocalcin-deficient mice.</title>
        <authorList>
            <person name="Ducy P."/>
            <person name="Desbois C."/>
            <person name="Boyce B."/>
            <person name="Pinero G."/>
            <person name="Story B."/>
            <person name="Dunstan C."/>
            <person name="Smith E."/>
            <person name="Bonadio J."/>
            <person name="Goldstein S."/>
            <person name="Gundberg C."/>
            <person name="Bradley A."/>
            <person name="Karsenty G."/>
        </authorList>
    </citation>
    <scope>FUNCTION</scope>
    <scope>DISRUPTION PHENOTYPE</scope>
</reference>
<reference key="5">
    <citation type="journal article" date="2007" name="Cell">
        <title>Endocrine regulation of energy metabolism by the skeleton.</title>
        <authorList>
            <person name="Lee N.K."/>
            <person name="Sowa H."/>
            <person name="Hinoi E."/>
            <person name="Ferron M."/>
            <person name="Ahn J.D."/>
            <person name="Confavreux C."/>
            <person name="Dacquin R."/>
            <person name="Mee P.J."/>
            <person name="McKee M.D."/>
            <person name="Jung D.Y."/>
            <person name="Zhang Z."/>
            <person name="Kim J.K."/>
            <person name="Mauvais-Jarvis F."/>
            <person name="Ducy P."/>
            <person name="Karsenty G."/>
        </authorList>
    </citation>
    <scope>FUNCTION</scope>
    <scope>SUBCELLULAR LOCATION</scope>
    <scope>GAMMA-CARBOXYGLUTAMATION</scope>
</reference>
<reference key="6">
    <citation type="journal article" date="2010" name="Cell">
        <title>Insulin signaling in osteoblasts integrates bone remodeling and energy metabolism.</title>
        <authorList>
            <person name="Ferron M."/>
            <person name="Wei J."/>
            <person name="Yoshizawa T."/>
            <person name="Del Fattore A."/>
            <person name="DePinho R.A."/>
            <person name="Teti A."/>
            <person name="Ducy P."/>
            <person name="Karsenty G."/>
        </authorList>
    </citation>
    <scope>FUNCTION</scope>
    <scope>SUBCELLULAR LOCATION</scope>
    <scope>GAMMA-CARBOXYGLUTAMATION</scope>
</reference>
<reference key="7">
    <citation type="journal article" date="2010" name="Cell">
        <title>Insulin receptor signaling in osteoblasts regulates postnatal bone acquisition and body composition.</title>
        <authorList>
            <person name="Fulzele K."/>
            <person name="Riddle R.C."/>
            <person name="DiGirolamo D.J."/>
            <person name="Cao X."/>
            <person name="Wan C."/>
            <person name="Chen D."/>
            <person name="Faugere M.C."/>
            <person name="Aja S."/>
            <person name="Hussain M.A."/>
            <person name="Bruening J.C."/>
            <person name="Clemens T.L."/>
        </authorList>
    </citation>
    <scope>FUNCTION</scope>
    <scope>SUBCELLULAR LOCATION</scope>
    <scope>GAMMA-CARBOXYGLUTAMATION</scope>
</reference>
<reference key="8">
    <citation type="journal article" date="2011" name="Cell">
        <title>Endocrine regulation of male fertility by the skeleton.</title>
        <authorList>
            <person name="Oury F."/>
            <person name="Sumara G."/>
            <person name="Sumara O."/>
            <person name="Ferron M."/>
            <person name="Chang H."/>
            <person name="Smith C.E."/>
            <person name="Hermo L."/>
            <person name="Suarez S."/>
            <person name="Roth B.L."/>
            <person name="Ducy P."/>
            <person name="Karsenty G."/>
        </authorList>
    </citation>
    <scope>FUNCTION</scope>
    <scope>SUBCELLULAR LOCATION</scope>
    <scope>GAMMA-CARBOXYGLUTAMATION</scope>
</reference>
<reference key="9">
    <citation type="journal article" date="2013" name="Cell">
        <title>Maternal and offspring pools of osteocalcin influence brain development and functions.</title>
        <authorList>
            <person name="Oury F."/>
            <person name="Khrimian L."/>
            <person name="Denny C.A."/>
            <person name="Gardin A."/>
            <person name="Chamouni A."/>
            <person name="Goeden N."/>
            <person name="Huang Y.Y."/>
            <person name="Lee H."/>
            <person name="Srinivas P."/>
            <person name="Gao X.B."/>
            <person name="Suyama S."/>
            <person name="Langer T."/>
            <person name="Mann J.J."/>
            <person name="Horvath T.L."/>
            <person name="Bonnin A."/>
            <person name="Karsenty G."/>
        </authorList>
    </citation>
    <scope>FUNCTION</scope>
    <scope>SUBCELLULAR LOCATION</scope>
    <scope>GAMMA-CARBOXYGLUTAMATION</scope>
    <scope>DISRUPTION PHENOTYPE</scope>
</reference>
<reference key="10">
    <citation type="journal article" date="2013" name="Eur. J. Oral Sci.">
        <title>Msx1 regulates proliferation and differentiation of mouse dental mesenchymal cells in culture.</title>
        <authorList>
            <person name="Feng X.Y."/>
            <person name="Zhao Y.M."/>
            <person name="Wang W.J."/>
            <person name="Ge L.H."/>
        </authorList>
    </citation>
    <scope>DEVELOPMENTAL STAGE</scope>
</reference>
<reference key="11">
    <citation type="journal article" date="2017" name="J. Exp. Med.">
        <title>Gpr158 mediates osteocalcin's regulation of cognition.</title>
        <authorList>
            <person name="Khrimian L."/>
            <person name="Obri A."/>
            <person name="Ramos-Brossier M."/>
            <person name="Rousseaud A."/>
            <person name="Moriceau S."/>
            <person name="Nicot A.S."/>
            <person name="Mera P."/>
            <person name="Kosmidis S."/>
            <person name="Karnavas T."/>
            <person name="Saudou F."/>
            <person name="Gao X.B."/>
            <person name="Oury F."/>
            <person name="Kandel E."/>
            <person name="Karsenty G."/>
        </authorList>
    </citation>
    <scope>FUNCTION</scope>
</reference>
<reference key="12">
    <citation type="journal article" date="2018" name="Eur. J. Oral Sci.">
        <title>Homeobox protein MSX-1 inhibits expression of bone morphogenetic protein 2, bone morphogenetic protein 4, and lymphoid enhancer-binding factor 1 via Wnt/beta-catenin signaling to prevent differentiation of dental mesenchymal cells during the late bell stage.</title>
        <authorList>
            <person name="Feng X.Y."/>
            <person name="Wu X.S."/>
            <person name="Wang J.S."/>
            <person name="Zhang C.M."/>
            <person name="Wang S.L."/>
        </authorList>
    </citation>
    <scope>DEVELOPMENTAL STAGE</scope>
</reference>